<sequence>MAMTVKKDNNEVRIQWRVADIKIPTSEIKNITQDQDIHAVPKLDSKDVSRIGSTFGKTNRVIIDTEDHEYIIYTQNDQKVYNELTK</sequence>
<comment type="similarity">
    <text evidence="1">Belongs to the UPF0457 family.</text>
</comment>
<dbReference type="EMBL" id="BA000017">
    <property type="protein sequence ID" value="BAB58335.2"/>
    <property type="molecule type" value="Genomic_DNA"/>
</dbReference>
<dbReference type="RefSeq" id="WP_001251935.1">
    <property type="nucleotide sequence ID" value="NC_002758.2"/>
</dbReference>
<dbReference type="SMR" id="Q931G8"/>
<dbReference type="KEGG" id="sav:SAV2173"/>
<dbReference type="HOGENOM" id="CLU_174851_0_0_9"/>
<dbReference type="Proteomes" id="UP000002481">
    <property type="component" value="Chromosome"/>
</dbReference>
<dbReference type="InterPro" id="IPR055365">
    <property type="entry name" value="PH_SunI-like"/>
</dbReference>
<dbReference type="Pfam" id="PF23491">
    <property type="entry name" value="bPH_8"/>
    <property type="match status" value="1"/>
</dbReference>
<feature type="chain" id="PRO_0000294501" description="UPF0457 protein SAV2173">
    <location>
        <begin position="1"/>
        <end position="86"/>
    </location>
</feature>
<organism>
    <name type="scientific">Staphylococcus aureus (strain Mu50 / ATCC 700699)</name>
    <dbReference type="NCBI Taxonomy" id="158878"/>
    <lineage>
        <taxon>Bacteria</taxon>
        <taxon>Bacillati</taxon>
        <taxon>Bacillota</taxon>
        <taxon>Bacilli</taxon>
        <taxon>Bacillales</taxon>
        <taxon>Staphylococcaceae</taxon>
        <taxon>Staphylococcus</taxon>
    </lineage>
</organism>
<evidence type="ECO:0000305" key="1"/>
<gene>
    <name type="ordered locus">SAV2173</name>
</gene>
<proteinExistence type="inferred from homology"/>
<protein>
    <recommendedName>
        <fullName>UPF0457 protein SAV2173</fullName>
    </recommendedName>
</protein>
<accession>Q931G8</accession>
<reference key="1">
    <citation type="journal article" date="2001" name="Lancet">
        <title>Whole genome sequencing of meticillin-resistant Staphylococcus aureus.</title>
        <authorList>
            <person name="Kuroda M."/>
            <person name="Ohta T."/>
            <person name="Uchiyama I."/>
            <person name="Baba T."/>
            <person name="Yuzawa H."/>
            <person name="Kobayashi I."/>
            <person name="Cui L."/>
            <person name="Oguchi A."/>
            <person name="Aoki K."/>
            <person name="Nagai Y."/>
            <person name="Lian J.-Q."/>
            <person name="Ito T."/>
            <person name="Kanamori M."/>
            <person name="Matsumaru H."/>
            <person name="Maruyama A."/>
            <person name="Murakami H."/>
            <person name="Hosoyama A."/>
            <person name="Mizutani-Ui Y."/>
            <person name="Takahashi N.K."/>
            <person name="Sawano T."/>
            <person name="Inoue R."/>
            <person name="Kaito C."/>
            <person name="Sekimizu K."/>
            <person name="Hirakawa H."/>
            <person name="Kuhara S."/>
            <person name="Goto S."/>
            <person name="Yabuzaki J."/>
            <person name="Kanehisa M."/>
            <person name="Yamashita A."/>
            <person name="Oshima K."/>
            <person name="Furuya K."/>
            <person name="Yoshino C."/>
            <person name="Shiba T."/>
            <person name="Hattori M."/>
            <person name="Ogasawara N."/>
            <person name="Hayashi H."/>
            <person name="Hiramatsu K."/>
        </authorList>
    </citation>
    <scope>NUCLEOTIDE SEQUENCE [LARGE SCALE GENOMIC DNA]</scope>
    <source>
        <strain>Mu50 / ATCC 700699</strain>
    </source>
</reference>
<name>Y2173_STAAM</name>